<protein>
    <recommendedName>
        <fullName evidence="1">Homoserine kinase</fullName>
        <shortName evidence="1">HK</shortName>
        <shortName evidence="1">HSK</shortName>
        <ecNumber evidence="1">2.7.1.39</ecNumber>
    </recommendedName>
</protein>
<evidence type="ECO:0000255" key="1">
    <source>
        <dbReference type="HAMAP-Rule" id="MF_00301"/>
    </source>
</evidence>
<comment type="catalytic activity">
    <reaction evidence="1">
        <text>L-homoserine + ATP = O-phospho-L-homoserine + ADP + H(+)</text>
        <dbReference type="Rhea" id="RHEA:13985"/>
        <dbReference type="ChEBI" id="CHEBI:15378"/>
        <dbReference type="ChEBI" id="CHEBI:30616"/>
        <dbReference type="ChEBI" id="CHEBI:57476"/>
        <dbReference type="ChEBI" id="CHEBI:57590"/>
        <dbReference type="ChEBI" id="CHEBI:456216"/>
        <dbReference type="EC" id="2.7.1.39"/>
    </reaction>
</comment>
<comment type="pathway">
    <text evidence="1">Amino-acid biosynthesis; L-threonine biosynthesis; L-threonine from L-aspartate: step 4/5.</text>
</comment>
<comment type="similarity">
    <text evidence="1">Belongs to the pseudomonas-type ThrB family.</text>
</comment>
<reference key="1">
    <citation type="submission" date="2009-01" db="EMBL/GenBank/DDBJ databases">
        <title>Complete sequence of chromosome of Methylobacterium nodulans ORS 2060.</title>
        <authorList>
            <consortium name="US DOE Joint Genome Institute"/>
            <person name="Lucas S."/>
            <person name="Copeland A."/>
            <person name="Lapidus A."/>
            <person name="Glavina del Rio T."/>
            <person name="Dalin E."/>
            <person name="Tice H."/>
            <person name="Bruce D."/>
            <person name="Goodwin L."/>
            <person name="Pitluck S."/>
            <person name="Sims D."/>
            <person name="Brettin T."/>
            <person name="Detter J.C."/>
            <person name="Han C."/>
            <person name="Larimer F."/>
            <person name="Land M."/>
            <person name="Hauser L."/>
            <person name="Kyrpides N."/>
            <person name="Ivanova N."/>
            <person name="Marx C.J."/>
            <person name="Richardson P."/>
        </authorList>
    </citation>
    <scope>NUCLEOTIDE SEQUENCE [LARGE SCALE GENOMIC DNA]</scope>
    <source>
        <strain>LMG 21967 / CNCM I-2342 / ORS 2060</strain>
    </source>
</reference>
<gene>
    <name evidence="1" type="primary">thrB</name>
    <name type="ordered locus">Mnod_7259</name>
</gene>
<proteinExistence type="inferred from homology"/>
<accession>B8ILM3</accession>
<organism>
    <name type="scientific">Methylobacterium nodulans (strain LMG 21967 / CNCM I-2342 / ORS 2060)</name>
    <dbReference type="NCBI Taxonomy" id="460265"/>
    <lineage>
        <taxon>Bacteria</taxon>
        <taxon>Pseudomonadati</taxon>
        <taxon>Pseudomonadota</taxon>
        <taxon>Alphaproteobacteria</taxon>
        <taxon>Hyphomicrobiales</taxon>
        <taxon>Methylobacteriaceae</taxon>
        <taxon>Methylobacterium</taxon>
    </lineage>
</organism>
<feature type="chain" id="PRO_1000196945" description="Homoserine kinase">
    <location>
        <begin position="1"/>
        <end position="321"/>
    </location>
</feature>
<sequence length="321" mass="35234">MAVYTEVPDEALGAFLSDYNIGGLLSYKGIAEGVENTNFFLHTTAGSYILTLYEKRVAEQDLPFFLGLMEHLAARGLACPQPIRTRAGTALGRLCGRPAVIVSFLEGVSVRRPGTRHCRALGRALAGLHAAGADFPMRRPNALSVEAWRPLFAQAEAQADRVAPNLAERTRADLARLEEAWPSDLPGGVIHADLFTDNVFFIGDEVSGLIDFYFACTDAFAYDLAICLNAWCFEPDGSFNRTKGQAMIAAYQSARPLEPREVASLPLLCQGAALRFMLTRLVDWLNVPPGALVKPKDPLEYDRKLAFHRRVTDAAEYGWSP</sequence>
<keyword id="KW-0028">Amino-acid biosynthesis</keyword>
<keyword id="KW-0067">ATP-binding</keyword>
<keyword id="KW-0418">Kinase</keyword>
<keyword id="KW-0547">Nucleotide-binding</keyword>
<keyword id="KW-1185">Reference proteome</keyword>
<keyword id="KW-0791">Threonine biosynthesis</keyword>
<keyword id="KW-0808">Transferase</keyword>
<dbReference type="EC" id="2.7.1.39" evidence="1"/>
<dbReference type="EMBL" id="CP001349">
    <property type="protein sequence ID" value="ACL61998.1"/>
    <property type="molecule type" value="Genomic_DNA"/>
</dbReference>
<dbReference type="RefSeq" id="WP_015933559.1">
    <property type="nucleotide sequence ID" value="NC_011894.1"/>
</dbReference>
<dbReference type="SMR" id="B8ILM3"/>
<dbReference type="STRING" id="460265.Mnod_7259"/>
<dbReference type="KEGG" id="mno:Mnod_7259"/>
<dbReference type="eggNOG" id="COG2334">
    <property type="taxonomic scope" value="Bacteria"/>
</dbReference>
<dbReference type="HOGENOM" id="CLU_053300_1_0_5"/>
<dbReference type="OrthoDB" id="9777460at2"/>
<dbReference type="UniPathway" id="UPA00050">
    <property type="reaction ID" value="UER00064"/>
</dbReference>
<dbReference type="Proteomes" id="UP000008207">
    <property type="component" value="Chromosome"/>
</dbReference>
<dbReference type="GO" id="GO:0005524">
    <property type="term" value="F:ATP binding"/>
    <property type="evidence" value="ECO:0007669"/>
    <property type="project" value="UniProtKB-KW"/>
</dbReference>
<dbReference type="GO" id="GO:0004413">
    <property type="term" value="F:homoserine kinase activity"/>
    <property type="evidence" value="ECO:0007669"/>
    <property type="project" value="UniProtKB-UniRule"/>
</dbReference>
<dbReference type="GO" id="GO:0009088">
    <property type="term" value="P:threonine biosynthetic process"/>
    <property type="evidence" value="ECO:0007669"/>
    <property type="project" value="UniProtKB-UniRule"/>
</dbReference>
<dbReference type="CDD" id="cd05153">
    <property type="entry name" value="HomoserineK_II"/>
    <property type="match status" value="1"/>
</dbReference>
<dbReference type="Gene3D" id="3.90.1200.10">
    <property type="match status" value="1"/>
</dbReference>
<dbReference type="Gene3D" id="3.30.200.20">
    <property type="entry name" value="Phosphorylase Kinase, domain 1"/>
    <property type="match status" value="1"/>
</dbReference>
<dbReference type="HAMAP" id="MF_00301">
    <property type="entry name" value="Homoser_kinase_2"/>
    <property type="match status" value="1"/>
</dbReference>
<dbReference type="InterPro" id="IPR002575">
    <property type="entry name" value="Aminoglycoside_PTrfase"/>
</dbReference>
<dbReference type="InterPro" id="IPR005280">
    <property type="entry name" value="Homoserine_kinase_II"/>
</dbReference>
<dbReference type="InterPro" id="IPR011009">
    <property type="entry name" value="Kinase-like_dom_sf"/>
</dbReference>
<dbReference type="InterPro" id="IPR050249">
    <property type="entry name" value="Pseudomonas-type_ThrB"/>
</dbReference>
<dbReference type="NCBIfam" id="NF003558">
    <property type="entry name" value="PRK05231.1"/>
    <property type="match status" value="1"/>
</dbReference>
<dbReference type="NCBIfam" id="TIGR00938">
    <property type="entry name" value="thrB_alt"/>
    <property type="match status" value="1"/>
</dbReference>
<dbReference type="PANTHER" id="PTHR21064:SF6">
    <property type="entry name" value="AMINOGLYCOSIDE PHOSPHOTRANSFERASE DOMAIN-CONTAINING PROTEIN"/>
    <property type="match status" value="1"/>
</dbReference>
<dbReference type="PANTHER" id="PTHR21064">
    <property type="entry name" value="AMINOGLYCOSIDE PHOSPHOTRANSFERASE DOMAIN-CONTAINING PROTEIN-RELATED"/>
    <property type="match status" value="1"/>
</dbReference>
<dbReference type="Pfam" id="PF01636">
    <property type="entry name" value="APH"/>
    <property type="match status" value="1"/>
</dbReference>
<dbReference type="SUPFAM" id="SSF56112">
    <property type="entry name" value="Protein kinase-like (PK-like)"/>
    <property type="match status" value="1"/>
</dbReference>
<name>KHSE_METNO</name>